<gene>
    <name evidence="1" type="primary">htpX</name>
    <name type="ordered locus">Dalk_2050</name>
</gene>
<accession>B8FG65</accession>
<feature type="chain" id="PRO_1000124225" description="Protease HtpX homolog">
    <location>
        <begin position="1"/>
        <end position="310"/>
    </location>
</feature>
<feature type="transmembrane region" description="Helical" evidence="1">
    <location>
        <begin position="7"/>
        <end position="27"/>
    </location>
</feature>
<feature type="transmembrane region" description="Helical" evidence="1">
    <location>
        <begin position="29"/>
        <end position="49"/>
    </location>
</feature>
<feature type="transmembrane region" description="Helical" evidence="1">
    <location>
        <begin position="141"/>
        <end position="161"/>
    </location>
</feature>
<feature type="transmembrane region" description="Helical" evidence="1">
    <location>
        <begin position="178"/>
        <end position="198"/>
    </location>
</feature>
<feature type="region of interest" description="Disordered" evidence="2">
    <location>
        <begin position="277"/>
        <end position="310"/>
    </location>
</feature>
<feature type="compositionally biased region" description="Basic and acidic residues" evidence="2">
    <location>
        <begin position="293"/>
        <end position="310"/>
    </location>
</feature>
<feature type="active site" evidence="1">
    <location>
        <position position="132"/>
    </location>
</feature>
<feature type="binding site" evidence="1">
    <location>
        <position position="131"/>
    </location>
    <ligand>
        <name>Zn(2+)</name>
        <dbReference type="ChEBI" id="CHEBI:29105"/>
        <note>catalytic</note>
    </ligand>
</feature>
<feature type="binding site" evidence="1">
    <location>
        <position position="135"/>
    </location>
    <ligand>
        <name>Zn(2+)</name>
        <dbReference type="ChEBI" id="CHEBI:29105"/>
        <note>catalytic</note>
    </ligand>
</feature>
<feature type="binding site" evidence="1">
    <location>
        <position position="207"/>
    </location>
    <ligand>
        <name>Zn(2+)</name>
        <dbReference type="ChEBI" id="CHEBI:29105"/>
        <note>catalytic</note>
    </ligand>
</feature>
<keyword id="KW-0997">Cell inner membrane</keyword>
<keyword id="KW-1003">Cell membrane</keyword>
<keyword id="KW-0378">Hydrolase</keyword>
<keyword id="KW-0472">Membrane</keyword>
<keyword id="KW-0479">Metal-binding</keyword>
<keyword id="KW-0482">Metalloprotease</keyword>
<keyword id="KW-0645">Protease</keyword>
<keyword id="KW-1185">Reference proteome</keyword>
<keyword id="KW-0812">Transmembrane</keyword>
<keyword id="KW-1133">Transmembrane helix</keyword>
<keyword id="KW-0862">Zinc</keyword>
<protein>
    <recommendedName>
        <fullName evidence="1">Protease HtpX homolog</fullName>
        <ecNumber evidence="1">3.4.24.-</ecNumber>
    </recommendedName>
</protein>
<name>HTPX_DESAL</name>
<sequence>MGNQIKSVMLLTAMTAFLLIVGQLIGGRAGMTFALIMAVGMNFFSYWYSDKIVLKMYRAKEVNPGQALELYGIVQRLSSNAGLPMPKVYIIPQQAPNAFATGRNPDHAVVAVTEGLLNLMNREELAGVLAHELAHVKNRDILIGTIAATMAGAVMFLASMAKWGAIFGGFGGNDDDSPLGFAGMLIMAILAPIGAALIQMTISRTREYQADATGAQIAGNPKGLANALAKLGAYSGRIPMDAEPATAHMFIVNPLSGKSLATLFSTHPPLEERIARLTGARPQSGGAPSGPERTARNAEDSAKDFWDSLK</sequence>
<proteinExistence type="inferred from homology"/>
<reference key="1">
    <citation type="journal article" date="2012" name="Environ. Microbiol.">
        <title>The genome sequence of Desulfatibacillum alkenivorans AK-01: a blueprint for anaerobic alkane oxidation.</title>
        <authorList>
            <person name="Callaghan A.V."/>
            <person name="Morris B.E."/>
            <person name="Pereira I.A."/>
            <person name="McInerney M.J."/>
            <person name="Austin R.N."/>
            <person name="Groves J.T."/>
            <person name="Kukor J.J."/>
            <person name="Suflita J.M."/>
            <person name="Young L.Y."/>
            <person name="Zylstra G.J."/>
            <person name="Wawrik B."/>
        </authorList>
    </citation>
    <scope>NUCLEOTIDE SEQUENCE [LARGE SCALE GENOMIC DNA]</scope>
    <source>
        <strain>AK-01</strain>
    </source>
</reference>
<dbReference type="EC" id="3.4.24.-" evidence="1"/>
<dbReference type="EMBL" id="CP001322">
    <property type="protein sequence ID" value="ACL03745.1"/>
    <property type="molecule type" value="Genomic_DNA"/>
</dbReference>
<dbReference type="RefSeq" id="WP_015946822.1">
    <property type="nucleotide sequence ID" value="NC_011768.1"/>
</dbReference>
<dbReference type="SMR" id="B8FG65"/>
<dbReference type="KEGG" id="dal:Dalk_2050"/>
<dbReference type="eggNOG" id="COG0501">
    <property type="taxonomic scope" value="Bacteria"/>
</dbReference>
<dbReference type="HOGENOM" id="CLU_042266_3_0_7"/>
<dbReference type="Proteomes" id="UP000000739">
    <property type="component" value="Chromosome"/>
</dbReference>
<dbReference type="GO" id="GO:0005886">
    <property type="term" value="C:plasma membrane"/>
    <property type="evidence" value="ECO:0007669"/>
    <property type="project" value="UniProtKB-SubCell"/>
</dbReference>
<dbReference type="GO" id="GO:0004222">
    <property type="term" value="F:metalloendopeptidase activity"/>
    <property type="evidence" value="ECO:0007669"/>
    <property type="project" value="UniProtKB-UniRule"/>
</dbReference>
<dbReference type="GO" id="GO:0008270">
    <property type="term" value="F:zinc ion binding"/>
    <property type="evidence" value="ECO:0007669"/>
    <property type="project" value="UniProtKB-UniRule"/>
</dbReference>
<dbReference type="GO" id="GO:0006508">
    <property type="term" value="P:proteolysis"/>
    <property type="evidence" value="ECO:0007669"/>
    <property type="project" value="UniProtKB-KW"/>
</dbReference>
<dbReference type="CDD" id="cd07336">
    <property type="entry name" value="M48B_HtpX_like"/>
    <property type="match status" value="1"/>
</dbReference>
<dbReference type="Gene3D" id="3.30.2010.10">
    <property type="entry name" value="Metalloproteases ('zincins'), catalytic domain"/>
    <property type="match status" value="1"/>
</dbReference>
<dbReference type="HAMAP" id="MF_00188">
    <property type="entry name" value="Pept_M48_protease_HtpX"/>
    <property type="match status" value="1"/>
</dbReference>
<dbReference type="InterPro" id="IPR050083">
    <property type="entry name" value="HtpX_protease"/>
</dbReference>
<dbReference type="InterPro" id="IPR022919">
    <property type="entry name" value="Pept_M48_protease_HtpX"/>
</dbReference>
<dbReference type="InterPro" id="IPR001915">
    <property type="entry name" value="Peptidase_M48"/>
</dbReference>
<dbReference type="NCBIfam" id="NF002826">
    <property type="entry name" value="PRK03001.1"/>
    <property type="match status" value="1"/>
</dbReference>
<dbReference type="PANTHER" id="PTHR43221">
    <property type="entry name" value="PROTEASE HTPX"/>
    <property type="match status" value="1"/>
</dbReference>
<dbReference type="PANTHER" id="PTHR43221:SF1">
    <property type="entry name" value="PROTEASE HTPX"/>
    <property type="match status" value="1"/>
</dbReference>
<dbReference type="Pfam" id="PF01435">
    <property type="entry name" value="Peptidase_M48"/>
    <property type="match status" value="1"/>
</dbReference>
<evidence type="ECO:0000255" key="1">
    <source>
        <dbReference type="HAMAP-Rule" id="MF_00188"/>
    </source>
</evidence>
<evidence type="ECO:0000256" key="2">
    <source>
        <dbReference type="SAM" id="MobiDB-lite"/>
    </source>
</evidence>
<organism>
    <name type="scientific">Desulfatibacillum aliphaticivorans</name>
    <dbReference type="NCBI Taxonomy" id="218208"/>
    <lineage>
        <taxon>Bacteria</taxon>
        <taxon>Pseudomonadati</taxon>
        <taxon>Thermodesulfobacteriota</taxon>
        <taxon>Desulfobacteria</taxon>
        <taxon>Desulfobacterales</taxon>
        <taxon>Desulfatibacillaceae</taxon>
        <taxon>Desulfatibacillum</taxon>
    </lineage>
</organism>
<comment type="cofactor">
    <cofactor evidence="1">
        <name>Zn(2+)</name>
        <dbReference type="ChEBI" id="CHEBI:29105"/>
    </cofactor>
    <text evidence="1">Binds 1 zinc ion per subunit.</text>
</comment>
<comment type="subcellular location">
    <subcellularLocation>
        <location evidence="1">Cell inner membrane</location>
        <topology evidence="1">Multi-pass membrane protein</topology>
    </subcellularLocation>
</comment>
<comment type="similarity">
    <text evidence="1">Belongs to the peptidase M48B family.</text>
</comment>